<keyword id="KW-0648">Protein biosynthesis</keyword>
<keyword id="KW-1185">Reference proteome</keyword>
<keyword id="KW-0808">Transferase</keyword>
<dbReference type="EC" id="2.1.2.9" evidence="1"/>
<dbReference type="EMBL" id="CP000771">
    <property type="protein sequence ID" value="ABS60757.1"/>
    <property type="molecule type" value="Genomic_DNA"/>
</dbReference>
<dbReference type="RefSeq" id="WP_011994072.1">
    <property type="nucleotide sequence ID" value="NC_009718.1"/>
</dbReference>
<dbReference type="SMR" id="A7HLH4"/>
<dbReference type="STRING" id="381764.Fnod_0907"/>
<dbReference type="KEGG" id="fno:Fnod_0907"/>
<dbReference type="eggNOG" id="COG0223">
    <property type="taxonomic scope" value="Bacteria"/>
</dbReference>
<dbReference type="HOGENOM" id="CLU_033347_1_1_0"/>
<dbReference type="OrthoDB" id="9802815at2"/>
<dbReference type="Proteomes" id="UP000002415">
    <property type="component" value="Chromosome"/>
</dbReference>
<dbReference type="GO" id="GO:0005829">
    <property type="term" value="C:cytosol"/>
    <property type="evidence" value="ECO:0007669"/>
    <property type="project" value="TreeGrafter"/>
</dbReference>
<dbReference type="GO" id="GO:0004479">
    <property type="term" value="F:methionyl-tRNA formyltransferase activity"/>
    <property type="evidence" value="ECO:0007669"/>
    <property type="project" value="UniProtKB-UniRule"/>
</dbReference>
<dbReference type="CDD" id="cd08646">
    <property type="entry name" value="FMT_core_Met-tRNA-FMT_N"/>
    <property type="match status" value="1"/>
</dbReference>
<dbReference type="CDD" id="cd08704">
    <property type="entry name" value="Met_tRNA_FMT_C"/>
    <property type="match status" value="1"/>
</dbReference>
<dbReference type="Gene3D" id="3.40.50.12230">
    <property type="match status" value="1"/>
</dbReference>
<dbReference type="HAMAP" id="MF_00182">
    <property type="entry name" value="Formyl_trans"/>
    <property type="match status" value="1"/>
</dbReference>
<dbReference type="InterPro" id="IPR005794">
    <property type="entry name" value="Fmt"/>
</dbReference>
<dbReference type="InterPro" id="IPR005793">
    <property type="entry name" value="Formyl_trans_C"/>
</dbReference>
<dbReference type="InterPro" id="IPR002376">
    <property type="entry name" value="Formyl_transf_N"/>
</dbReference>
<dbReference type="InterPro" id="IPR036477">
    <property type="entry name" value="Formyl_transf_N_sf"/>
</dbReference>
<dbReference type="InterPro" id="IPR011034">
    <property type="entry name" value="Formyl_transferase-like_C_sf"/>
</dbReference>
<dbReference type="InterPro" id="IPR044135">
    <property type="entry name" value="Met-tRNA-FMT_C"/>
</dbReference>
<dbReference type="InterPro" id="IPR041711">
    <property type="entry name" value="Met-tRNA-FMT_N"/>
</dbReference>
<dbReference type="NCBIfam" id="TIGR00460">
    <property type="entry name" value="fmt"/>
    <property type="match status" value="1"/>
</dbReference>
<dbReference type="PANTHER" id="PTHR11138">
    <property type="entry name" value="METHIONYL-TRNA FORMYLTRANSFERASE"/>
    <property type="match status" value="1"/>
</dbReference>
<dbReference type="PANTHER" id="PTHR11138:SF5">
    <property type="entry name" value="METHIONYL-TRNA FORMYLTRANSFERASE, MITOCHONDRIAL"/>
    <property type="match status" value="1"/>
</dbReference>
<dbReference type="Pfam" id="PF02911">
    <property type="entry name" value="Formyl_trans_C"/>
    <property type="match status" value="1"/>
</dbReference>
<dbReference type="Pfam" id="PF00551">
    <property type="entry name" value="Formyl_trans_N"/>
    <property type="match status" value="1"/>
</dbReference>
<dbReference type="SUPFAM" id="SSF50486">
    <property type="entry name" value="FMT C-terminal domain-like"/>
    <property type="match status" value="1"/>
</dbReference>
<dbReference type="SUPFAM" id="SSF53328">
    <property type="entry name" value="Formyltransferase"/>
    <property type="match status" value="1"/>
</dbReference>
<reference key="1">
    <citation type="submission" date="2007-07" db="EMBL/GenBank/DDBJ databases">
        <title>Complete sequence of Fervidobacterium nodosum Rt17-B1.</title>
        <authorList>
            <consortium name="US DOE Joint Genome Institute"/>
            <person name="Copeland A."/>
            <person name="Lucas S."/>
            <person name="Lapidus A."/>
            <person name="Barry K."/>
            <person name="Glavina del Rio T."/>
            <person name="Dalin E."/>
            <person name="Tice H."/>
            <person name="Pitluck S."/>
            <person name="Saunders E."/>
            <person name="Brettin T."/>
            <person name="Bruce D."/>
            <person name="Detter J.C."/>
            <person name="Han C."/>
            <person name="Schmutz J."/>
            <person name="Larimer F."/>
            <person name="Land M."/>
            <person name="Hauser L."/>
            <person name="Kyrpides N."/>
            <person name="Mikhailova N."/>
            <person name="Nelson K."/>
            <person name="Gogarten J.P."/>
            <person name="Noll K."/>
            <person name="Richardson P."/>
        </authorList>
    </citation>
    <scope>NUCLEOTIDE SEQUENCE [LARGE SCALE GENOMIC DNA]</scope>
    <source>
        <strain>ATCC 35602 / DSM 5306 / Rt17-B1</strain>
    </source>
</reference>
<proteinExistence type="inferred from homology"/>
<feature type="chain" id="PRO_1000071661" description="Methionyl-tRNA formyltransferase">
    <location>
        <begin position="1"/>
        <end position="310"/>
    </location>
</feature>
<feature type="binding site" evidence="1">
    <location>
        <begin position="106"/>
        <end position="109"/>
    </location>
    <ligand>
        <name>(6S)-5,6,7,8-tetrahydrofolate</name>
        <dbReference type="ChEBI" id="CHEBI:57453"/>
    </ligand>
</feature>
<comment type="function">
    <text evidence="1">Attaches a formyl group to the free amino group of methionyl-tRNA(fMet). The formyl group appears to play a dual role in the initiator identity of N-formylmethionyl-tRNA by promoting its recognition by IF2 and preventing the misappropriation of this tRNA by the elongation apparatus.</text>
</comment>
<comment type="catalytic activity">
    <reaction evidence="1">
        <text>L-methionyl-tRNA(fMet) + (6R)-10-formyltetrahydrofolate = N-formyl-L-methionyl-tRNA(fMet) + (6S)-5,6,7,8-tetrahydrofolate + H(+)</text>
        <dbReference type="Rhea" id="RHEA:24380"/>
        <dbReference type="Rhea" id="RHEA-COMP:9952"/>
        <dbReference type="Rhea" id="RHEA-COMP:9953"/>
        <dbReference type="ChEBI" id="CHEBI:15378"/>
        <dbReference type="ChEBI" id="CHEBI:57453"/>
        <dbReference type="ChEBI" id="CHEBI:78530"/>
        <dbReference type="ChEBI" id="CHEBI:78844"/>
        <dbReference type="ChEBI" id="CHEBI:195366"/>
        <dbReference type="EC" id="2.1.2.9"/>
    </reaction>
</comment>
<comment type="similarity">
    <text evidence="1">Belongs to the Fmt family.</text>
</comment>
<sequence length="310" mass="35065">MRILFMGTPEFAASYLDFLIQKKFNVVAVISQKDKPRGRGQKLLPTPVKEVAQKYGIPVFQPSKLNEEGLEIIENYRPDIGIVVAYGRLLRKPFLDAIPLYNVHTSLLPKYRGPAPMQRAIENGERVTGVTIFKISEGMDEGDIALQRAFELEECEPFGSVYEKFIKYGTELLQEFLRNYPVTLTPQDHSKATYAPKIEKKDLYVDFSKPAVEVRNKIRAYDPTPGVRTFLNDIEVKLYGACEIESNSQENIEPGTVVRIEKQSGDGVIKTIDGLLHIKYIQFPGKNKITFLSAKNGGLIKEGMVFRNLD</sequence>
<name>FMT_FERNB</name>
<evidence type="ECO:0000255" key="1">
    <source>
        <dbReference type="HAMAP-Rule" id="MF_00182"/>
    </source>
</evidence>
<accession>A7HLH4</accession>
<organism>
    <name type="scientific">Fervidobacterium nodosum (strain ATCC 35602 / DSM 5306 / Rt17-B1)</name>
    <dbReference type="NCBI Taxonomy" id="381764"/>
    <lineage>
        <taxon>Bacteria</taxon>
        <taxon>Thermotogati</taxon>
        <taxon>Thermotogota</taxon>
        <taxon>Thermotogae</taxon>
        <taxon>Thermotogales</taxon>
        <taxon>Fervidobacteriaceae</taxon>
        <taxon>Fervidobacterium</taxon>
    </lineage>
</organism>
<gene>
    <name evidence="1" type="primary">fmt</name>
    <name type="ordered locus">Fnod_0907</name>
</gene>
<protein>
    <recommendedName>
        <fullName evidence="1">Methionyl-tRNA formyltransferase</fullName>
        <ecNumber evidence="1">2.1.2.9</ecNumber>
    </recommendedName>
</protein>